<comment type="function">
    <text evidence="1">ATP-dependent RNA helicase which is a subunit of the eIF4F complex involved in cap recognition and is required for mRNA binding to ribosome. In the current model of translation initiation, eIF4A unwinds RNA secondary structures in the 5'-UTR of mRNAs which is necessary to allow efficient binding of the small ribosomal subunit, and subsequent scanning for the initiator codon (By similarity).</text>
</comment>
<comment type="catalytic activity">
    <reaction>
        <text>ATP + H2O = ADP + phosphate + H(+)</text>
        <dbReference type="Rhea" id="RHEA:13065"/>
        <dbReference type="ChEBI" id="CHEBI:15377"/>
        <dbReference type="ChEBI" id="CHEBI:15378"/>
        <dbReference type="ChEBI" id="CHEBI:30616"/>
        <dbReference type="ChEBI" id="CHEBI:43474"/>
        <dbReference type="ChEBI" id="CHEBI:456216"/>
        <dbReference type="EC" id="3.6.4.13"/>
    </reaction>
</comment>
<comment type="subunit">
    <text evidence="1">Component of the eIF4F complex, which composition varies with external and internal environmental conditions. It is composed of at least eIF4A, eIF4E and eIF4G (By similarity).</text>
</comment>
<comment type="subcellular location">
    <subcellularLocation>
        <location evidence="1">Cytoplasm</location>
    </subcellularLocation>
</comment>
<comment type="domain">
    <text>The Q motif is unique to and characteristic of the DEAD box family of RNA helicases and controls ATP binding and hydrolysis.</text>
</comment>
<comment type="similarity">
    <text evidence="4">Belongs to the DEAD box helicase family. eIF4A subfamily.</text>
</comment>
<organism>
    <name type="scientific">Cryptococcus neoformans var. neoformans serotype D (strain B-3501A)</name>
    <name type="common">Filobasidiella neoformans</name>
    <dbReference type="NCBI Taxonomy" id="283643"/>
    <lineage>
        <taxon>Eukaryota</taxon>
        <taxon>Fungi</taxon>
        <taxon>Dikarya</taxon>
        <taxon>Basidiomycota</taxon>
        <taxon>Agaricomycotina</taxon>
        <taxon>Tremellomycetes</taxon>
        <taxon>Tremellales</taxon>
        <taxon>Cryptococcaceae</taxon>
        <taxon>Cryptococcus</taxon>
        <taxon>Cryptococcus neoformans species complex</taxon>
    </lineage>
</organism>
<reference key="1">
    <citation type="journal article" date="2005" name="Science">
        <title>The genome of the basidiomycetous yeast and human pathogen Cryptococcus neoformans.</title>
        <authorList>
            <person name="Loftus B.J."/>
            <person name="Fung E."/>
            <person name="Roncaglia P."/>
            <person name="Rowley D."/>
            <person name="Amedeo P."/>
            <person name="Bruno D."/>
            <person name="Vamathevan J."/>
            <person name="Miranda M."/>
            <person name="Anderson I.J."/>
            <person name="Fraser J.A."/>
            <person name="Allen J.E."/>
            <person name="Bosdet I.E."/>
            <person name="Brent M.R."/>
            <person name="Chiu R."/>
            <person name="Doering T.L."/>
            <person name="Donlin M.J."/>
            <person name="D'Souza C.A."/>
            <person name="Fox D.S."/>
            <person name="Grinberg V."/>
            <person name="Fu J."/>
            <person name="Fukushima M."/>
            <person name="Haas B.J."/>
            <person name="Huang J.C."/>
            <person name="Janbon G."/>
            <person name="Jones S.J.M."/>
            <person name="Koo H.L."/>
            <person name="Krzywinski M.I."/>
            <person name="Kwon-Chung K.J."/>
            <person name="Lengeler K.B."/>
            <person name="Maiti R."/>
            <person name="Marra M.A."/>
            <person name="Marra R.E."/>
            <person name="Mathewson C.A."/>
            <person name="Mitchell T.G."/>
            <person name="Pertea M."/>
            <person name="Riggs F.R."/>
            <person name="Salzberg S.L."/>
            <person name="Schein J.E."/>
            <person name="Shvartsbeyn A."/>
            <person name="Shin H."/>
            <person name="Shumway M."/>
            <person name="Specht C.A."/>
            <person name="Suh B.B."/>
            <person name="Tenney A."/>
            <person name="Utterback T.R."/>
            <person name="Wickes B.L."/>
            <person name="Wortman J.R."/>
            <person name="Wye N.H."/>
            <person name="Kronstad J.W."/>
            <person name="Lodge J.K."/>
            <person name="Heitman J."/>
            <person name="Davis R.W."/>
            <person name="Fraser C.M."/>
            <person name="Hyman R.W."/>
        </authorList>
    </citation>
    <scope>NUCLEOTIDE SEQUENCE [LARGE SCALE GENOMIC DNA]</scope>
    <source>
        <strain>B-3501A</strain>
    </source>
</reference>
<name>IF4A_CRYNB</name>
<keyword id="KW-0067">ATP-binding</keyword>
<keyword id="KW-0963">Cytoplasm</keyword>
<keyword id="KW-0347">Helicase</keyword>
<keyword id="KW-0378">Hydrolase</keyword>
<keyword id="KW-0396">Initiation factor</keyword>
<keyword id="KW-0547">Nucleotide-binding</keyword>
<keyword id="KW-0648">Protein biosynthesis</keyword>
<keyword id="KW-0694">RNA-binding</keyword>
<gene>
    <name type="primary">TIF1</name>
    <name type="synonym">TIF41</name>
    <name type="ordered locus">CNBA7450</name>
</gene>
<accession>P0CQ71</accession>
<accession>Q55YU1</accession>
<accession>Q5KN60</accession>
<sequence length="401" mass="45144">MSDTKGAAEQGLQIDGDLINSNWNEVVDNFDDMKLKGELLRGIYAYGFERPSAIQQRAIMPIVTGRDCIAQAQSGTGKTATFSVSILQRIDTTVKKTQALVLAPTRELAQQIQKVVIALGDYLNVDCHACVGGTAVREDIARLNEGPHIVVGTPGRVFDMINRGALKTEAVMMFCLDEADEMLSTGFKESIYEIFQLLPGETQVVLLSATMAPEVLDVTKKFMRDPIRILVKKDELTLEGIRQFYINVEKEEWKLETLCDLYETVTITQAVIFCSTRRKVDWLTQQLHDRQFTVSAMHGDMKQEEREVIMKEFRSGSSRVLITTDLLARGIDVQQVSLVINYDLPSSKENYIHRIGRGGRFGRKGVAINFVSNEDKNMLEEIETYYNTQVEEMPLNVADLI</sequence>
<proteinExistence type="inferred from homology"/>
<evidence type="ECO:0000250" key="1"/>
<evidence type="ECO:0000255" key="2">
    <source>
        <dbReference type="PROSITE-ProRule" id="PRU00541"/>
    </source>
</evidence>
<evidence type="ECO:0000255" key="3">
    <source>
        <dbReference type="PROSITE-ProRule" id="PRU00542"/>
    </source>
</evidence>
<evidence type="ECO:0000305" key="4"/>
<feature type="chain" id="PRO_0000410246" description="ATP-dependent RNA helicase eIF4A">
    <location>
        <begin position="1"/>
        <end position="401"/>
    </location>
</feature>
<feature type="domain" description="Helicase ATP-binding" evidence="2">
    <location>
        <begin position="59"/>
        <end position="229"/>
    </location>
</feature>
<feature type="domain" description="Helicase C-terminal" evidence="3">
    <location>
        <begin position="240"/>
        <end position="401"/>
    </location>
</feature>
<feature type="short sequence motif" description="Q motif">
    <location>
        <begin position="28"/>
        <end position="56"/>
    </location>
</feature>
<feature type="short sequence motif" description="DEAD box">
    <location>
        <begin position="177"/>
        <end position="180"/>
    </location>
</feature>
<feature type="binding site" evidence="2">
    <location>
        <begin position="72"/>
        <end position="79"/>
    </location>
    <ligand>
        <name>ATP</name>
        <dbReference type="ChEBI" id="CHEBI:30616"/>
    </ligand>
</feature>
<protein>
    <recommendedName>
        <fullName>ATP-dependent RNA helicase eIF4A</fullName>
        <ecNumber>3.6.4.13</ecNumber>
    </recommendedName>
    <alternativeName>
        <fullName>Eukaryotic initiation factor 4A</fullName>
        <shortName>eIF-4A</shortName>
    </alternativeName>
    <alternativeName>
        <fullName>Translation initiation factor 1</fullName>
    </alternativeName>
</protein>
<dbReference type="EC" id="3.6.4.13"/>
<dbReference type="EMBL" id="AAEY01000005">
    <property type="protein sequence ID" value="EAL22977.1"/>
    <property type="molecule type" value="Genomic_DNA"/>
</dbReference>
<dbReference type="RefSeq" id="XP_777624.1">
    <property type="nucleotide sequence ID" value="XM_772531.1"/>
</dbReference>
<dbReference type="SMR" id="P0CQ71"/>
<dbReference type="EnsemblFungi" id="AAW41293">
    <property type="protein sequence ID" value="AAW41293"/>
    <property type="gene ID" value="CNA07620"/>
</dbReference>
<dbReference type="GeneID" id="4934011"/>
<dbReference type="KEGG" id="cnb:CNBA7450"/>
<dbReference type="VEuPathDB" id="FungiDB:CNBA7450"/>
<dbReference type="HOGENOM" id="CLU_003041_1_0_1"/>
<dbReference type="OrthoDB" id="1978at5206"/>
<dbReference type="GO" id="GO:0005737">
    <property type="term" value="C:cytoplasm"/>
    <property type="evidence" value="ECO:0007669"/>
    <property type="project" value="UniProtKB-SubCell"/>
</dbReference>
<dbReference type="GO" id="GO:0005524">
    <property type="term" value="F:ATP binding"/>
    <property type="evidence" value="ECO:0007669"/>
    <property type="project" value="UniProtKB-KW"/>
</dbReference>
<dbReference type="GO" id="GO:0016887">
    <property type="term" value="F:ATP hydrolysis activity"/>
    <property type="evidence" value="ECO:0007669"/>
    <property type="project" value="RHEA"/>
</dbReference>
<dbReference type="GO" id="GO:0003723">
    <property type="term" value="F:RNA binding"/>
    <property type="evidence" value="ECO:0007669"/>
    <property type="project" value="UniProtKB-KW"/>
</dbReference>
<dbReference type="GO" id="GO:0003724">
    <property type="term" value="F:RNA helicase activity"/>
    <property type="evidence" value="ECO:0007669"/>
    <property type="project" value="UniProtKB-EC"/>
</dbReference>
<dbReference type="GO" id="GO:0003743">
    <property type="term" value="F:translation initiation factor activity"/>
    <property type="evidence" value="ECO:0007669"/>
    <property type="project" value="UniProtKB-KW"/>
</dbReference>
<dbReference type="CDD" id="cd18046">
    <property type="entry name" value="DEADc_EIF4AII_EIF4AI_DDX2"/>
    <property type="match status" value="1"/>
</dbReference>
<dbReference type="CDD" id="cd18787">
    <property type="entry name" value="SF2_C_DEAD"/>
    <property type="match status" value="1"/>
</dbReference>
<dbReference type="FunFam" id="3.40.50.300:FF:000089">
    <property type="entry name" value="Eukaryotic initiation factor 4A-II"/>
    <property type="match status" value="1"/>
</dbReference>
<dbReference type="FunFam" id="3.40.50.300:FF:000031">
    <property type="entry name" value="Eukaryotic initiation factor 4A-III"/>
    <property type="match status" value="1"/>
</dbReference>
<dbReference type="Gene3D" id="3.40.50.300">
    <property type="entry name" value="P-loop containing nucleotide triphosphate hydrolases"/>
    <property type="match status" value="2"/>
</dbReference>
<dbReference type="InterPro" id="IPR011545">
    <property type="entry name" value="DEAD/DEAH_box_helicase_dom"/>
</dbReference>
<dbReference type="InterPro" id="IPR044728">
    <property type="entry name" value="EIF4A_DEADc"/>
</dbReference>
<dbReference type="InterPro" id="IPR014001">
    <property type="entry name" value="Helicase_ATP-bd"/>
</dbReference>
<dbReference type="InterPro" id="IPR001650">
    <property type="entry name" value="Helicase_C-like"/>
</dbReference>
<dbReference type="InterPro" id="IPR027417">
    <property type="entry name" value="P-loop_NTPase"/>
</dbReference>
<dbReference type="InterPro" id="IPR014014">
    <property type="entry name" value="RNA_helicase_DEAD_Q_motif"/>
</dbReference>
<dbReference type="PANTHER" id="PTHR47958">
    <property type="entry name" value="ATP-DEPENDENT RNA HELICASE DBP3"/>
    <property type="match status" value="1"/>
</dbReference>
<dbReference type="Pfam" id="PF00270">
    <property type="entry name" value="DEAD"/>
    <property type="match status" value="1"/>
</dbReference>
<dbReference type="Pfam" id="PF00271">
    <property type="entry name" value="Helicase_C"/>
    <property type="match status" value="1"/>
</dbReference>
<dbReference type="SMART" id="SM00487">
    <property type="entry name" value="DEXDc"/>
    <property type="match status" value="1"/>
</dbReference>
<dbReference type="SMART" id="SM00490">
    <property type="entry name" value="HELICc"/>
    <property type="match status" value="1"/>
</dbReference>
<dbReference type="SUPFAM" id="SSF52540">
    <property type="entry name" value="P-loop containing nucleoside triphosphate hydrolases"/>
    <property type="match status" value="1"/>
</dbReference>
<dbReference type="PROSITE" id="PS51192">
    <property type="entry name" value="HELICASE_ATP_BIND_1"/>
    <property type="match status" value="1"/>
</dbReference>
<dbReference type="PROSITE" id="PS51194">
    <property type="entry name" value="HELICASE_CTER"/>
    <property type="match status" value="1"/>
</dbReference>
<dbReference type="PROSITE" id="PS51195">
    <property type="entry name" value="Q_MOTIF"/>
    <property type="match status" value="1"/>
</dbReference>